<organism>
    <name type="scientific">Nautilia profundicola (strain ATCC BAA-1463 / DSM 18972 / AmH)</name>
    <dbReference type="NCBI Taxonomy" id="598659"/>
    <lineage>
        <taxon>Bacteria</taxon>
        <taxon>Pseudomonadati</taxon>
        <taxon>Campylobacterota</taxon>
        <taxon>Epsilonproteobacteria</taxon>
        <taxon>Nautiliales</taxon>
        <taxon>Nautiliaceae</taxon>
        <taxon>Nautilia</taxon>
    </lineage>
</organism>
<sequence length="284" mass="30988">MTILDGKKLSEKIKDNLKKEVDELKTKGITPGLAVILVGDDPASHTYVKMKRNACQKVGIYSVVHEFPESITEKELLSTIKMINENPNIHGLLIQLPLPKHIDTTKILEAVDPSKDVDGFHPYNMGRLVEGLDTFAPCTPLGVMEIFEEYEIDLKGKDVCVVGASNIVGKPMWALLVNAWATVDICHIETKDLAAHTKRADIVIVGVGKPNLITADMVKDGVIVIDIGINRLEDGRLVGDVDFENVSKKASYITPVPGGVGPMTIAMLLKNTVKAAKNFAKEVK</sequence>
<reference key="1">
    <citation type="journal article" date="2009" name="PLoS Genet.">
        <title>Adaptations to submarine hydrothermal environments exemplified by the genome of Nautilia profundicola.</title>
        <authorList>
            <person name="Campbell B.J."/>
            <person name="Smith J.L."/>
            <person name="Hanson T.E."/>
            <person name="Klotz M.G."/>
            <person name="Stein L.Y."/>
            <person name="Lee C.K."/>
            <person name="Wu D."/>
            <person name="Robinson J.M."/>
            <person name="Khouri H.M."/>
            <person name="Eisen J.A."/>
            <person name="Cary S.C."/>
        </authorList>
    </citation>
    <scope>NUCLEOTIDE SEQUENCE [LARGE SCALE GENOMIC DNA]</scope>
    <source>
        <strain>ATCC BAA-1463 / DSM 18972 / AmH</strain>
    </source>
</reference>
<proteinExistence type="inferred from homology"/>
<keyword id="KW-0028">Amino-acid biosynthesis</keyword>
<keyword id="KW-0368">Histidine biosynthesis</keyword>
<keyword id="KW-0378">Hydrolase</keyword>
<keyword id="KW-0486">Methionine biosynthesis</keyword>
<keyword id="KW-0511">Multifunctional enzyme</keyword>
<keyword id="KW-0521">NADP</keyword>
<keyword id="KW-0554">One-carbon metabolism</keyword>
<keyword id="KW-0560">Oxidoreductase</keyword>
<keyword id="KW-0658">Purine biosynthesis</keyword>
<accession>B9L952</accession>
<protein>
    <recommendedName>
        <fullName evidence="1">Bifunctional protein FolD</fullName>
    </recommendedName>
    <domain>
        <recommendedName>
            <fullName evidence="1">Methylenetetrahydrofolate dehydrogenase</fullName>
            <ecNumber evidence="1">1.5.1.5</ecNumber>
        </recommendedName>
    </domain>
    <domain>
        <recommendedName>
            <fullName evidence="1">Methenyltetrahydrofolate cyclohydrolase</fullName>
            <ecNumber evidence="1">3.5.4.9</ecNumber>
        </recommendedName>
    </domain>
</protein>
<name>FOLD_NAUPA</name>
<dbReference type="EC" id="1.5.1.5" evidence="1"/>
<dbReference type="EC" id="3.5.4.9" evidence="1"/>
<dbReference type="EMBL" id="CP001279">
    <property type="protein sequence ID" value="ACM93550.1"/>
    <property type="molecule type" value="Genomic_DNA"/>
</dbReference>
<dbReference type="RefSeq" id="WP_015902602.1">
    <property type="nucleotide sequence ID" value="NC_012115.1"/>
</dbReference>
<dbReference type="SMR" id="B9L952"/>
<dbReference type="STRING" id="598659.NAMH_0757"/>
<dbReference type="KEGG" id="nam:NAMH_0757"/>
<dbReference type="eggNOG" id="COG0190">
    <property type="taxonomic scope" value="Bacteria"/>
</dbReference>
<dbReference type="HOGENOM" id="CLU_034045_2_1_7"/>
<dbReference type="OrthoDB" id="9803580at2"/>
<dbReference type="UniPathway" id="UPA00193"/>
<dbReference type="Proteomes" id="UP000000448">
    <property type="component" value="Chromosome"/>
</dbReference>
<dbReference type="GO" id="GO:0005829">
    <property type="term" value="C:cytosol"/>
    <property type="evidence" value="ECO:0007669"/>
    <property type="project" value="TreeGrafter"/>
</dbReference>
<dbReference type="GO" id="GO:0004477">
    <property type="term" value="F:methenyltetrahydrofolate cyclohydrolase activity"/>
    <property type="evidence" value="ECO:0007669"/>
    <property type="project" value="UniProtKB-UniRule"/>
</dbReference>
<dbReference type="GO" id="GO:0004488">
    <property type="term" value="F:methylenetetrahydrofolate dehydrogenase (NADP+) activity"/>
    <property type="evidence" value="ECO:0007669"/>
    <property type="project" value="UniProtKB-UniRule"/>
</dbReference>
<dbReference type="GO" id="GO:0000105">
    <property type="term" value="P:L-histidine biosynthetic process"/>
    <property type="evidence" value="ECO:0007669"/>
    <property type="project" value="UniProtKB-KW"/>
</dbReference>
<dbReference type="GO" id="GO:0009086">
    <property type="term" value="P:methionine biosynthetic process"/>
    <property type="evidence" value="ECO:0007669"/>
    <property type="project" value="UniProtKB-KW"/>
</dbReference>
<dbReference type="GO" id="GO:0006164">
    <property type="term" value="P:purine nucleotide biosynthetic process"/>
    <property type="evidence" value="ECO:0007669"/>
    <property type="project" value="UniProtKB-KW"/>
</dbReference>
<dbReference type="GO" id="GO:0035999">
    <property type="term" value="P:tetrahydrofolate interconversion"/>
    <property type="evidence" value="ECO:0007669"/>
    <property type="project" value="UniProtKB-UniRule"/>
</dbReference>
<dbReference type="CDD" id="cd01080">
    <property type="entry name" value="NAD_bind_m-THF_DH_Cyclohyd"/>
    <property type="match status" value="1"/>
</dbReference>
<dbReference type="FunFam" id="3.40.50.10860:FF:000001">
    <property type="entry name" value="Bifunctional protein FolD"/>
    <property type="match status" value="1"/>
</dbReference>
<dbReference type="FunFam" id="3.40.50.720:FF:000094">
    <property type="entry name" value="Bifunctional protein FolD"/>
    <property type="match status" value="1"/>
</dbReference>
<dbReference type="Gene3D" id="3.40.50.10860">
    <property type="entry name" value="Leucine Dehydrogenase, chain A, domain 1"/>
    <property type="match status" value="1"/>
</dbReference>
<dbReference type="Gene3D" id="3.40.50.720">
    <property type="entry name" value="NAD(P)-binding Rossmann-like Domain"/>
    <property type="match status" value="1"/>
</dbReference>
<dbReference type="HAMAP" id="MF_01576">
    <property type="entry name" value="THF_DHG_CYH"/>
    <property type="match status" value="1"/>
</dbReference>
<dbReference type="InterPro" id="IPR046346">
    <property type="entry name" value="Aminoacid_DH-like_N_sf"/>
</dbReference>
<dbReference type="InterPro" id="IPR036291">
    <property type="entry name" value="NAD(P)-bd_dom_sf"/>
</dbReference>
<dbReference type="InterPro" id="IPR000672">
    <property type="entry name" value="THF_DH/CycHdrlase"/>
</dbReference>
<dbReference type="InterPro" id="IPR020630">
    <property type="entry name" value="THF_DH/CycHdrlase_cat_dom"/>
</dbReference>
<dbReference type="InterPro" id="IPR020867">
    <property type="entry name" value="THF_DH/CycHdrlase_CS"/>
</dbReference>
<dbReference type="InterPro" id="IPR020631">
    <property type="entry name" value="THF_DH/CycHdrlase_NAD-bd_dom"/>
</dbReference>
<dbReference type="NCBIfam" id="NF008058">
    <property type="entry name" value="PRK10792.1"/>
    <property type="match status" value="1"/>
</dbReference>
<dbReference type="NCBIfam" id="NF010780">
    <property type="entry name" value="PRK14183.1"/>
    <property type="match status" value="1"/>
</dbReference>
<dbReference type="NCBIfam" id="NF010783">
    <property type="entry name" value="PRK14186.1"/>
    <property type="match status" value="1"/>
</dbReference>
<dbReference type="NCBIfam" id="NF010787">
    <property type="entry name" value="PRK14191.1"/>
    <property type="match status" value="1"/>
</dbReference>
<dbReference type="PANTHER" id="PTHR48099:SF5">
    <property type="entry name" value="C-1-TETRAHYDROFOLATE SYNTHASE, CYTOPLASMIC"/>
    <property type="match status" value="1"/>
</dbReference>
<dbReference type="PANTHER" id="PTHR48099">
    <property type="entry name" value="C-1-TETRAHYDROFOLATE SYNTHASE, CYTOPLASMIC-RELATED"/>
    <property type="match status" value="1"/>
</dbReference>
<dbReference type="Pfam" id="PF00763">
    <property type="entry name" value="THF_DHG_CYH"/>
    <property type="match status" value="1"/>
</dbReference>
<dbReference type="Pfam" id="PF02882">
    <property type="entry name" value="THF_DHG_CYH_C"/>
    <property type="match status" value="1"/>
</dbReference>
<dbReference type="PRINTS" id="PR00085">
    <property type="entry name" value="THFDHDRGNASE"/>
</dbReference>
<dbReference type="SUPFAM" id="SSF53223">
    <property type="entry name" value="Aminoacid dehydrogenase-like, N-terminal domain"/>
    <property type="match status" value="1"/>
</dbReference>
<dbReference type="SUPFAM" id="SSF51735">
    <property type="entry name" value="NAD(P)-binding Rossmann-fold domains"/>
    <property type="match status" value="1"/>
</dbReference>
<dbReference type="PROSITE" id="PS00766">
    <property type="entry name" value="THF_DHG_CYH_1"/>
    <property type="match status" value="1"/>
</dbReference>
<dbReference type="PROSITE" id="PS00767">
    <property type="entry name" value="THF_DHG_CYH_2"/>
    <property type="match status" value="1"/>
</dbReference>
<feature type="chain" id="PRO_1000185624" description="Bifunctional protein FolD">
    <location>
        <begin position="1"/>
        <end position="284"/>
    </location>
</feature>
<feature type="binding site" evidence="1">
    <location>
        <begin position="163"/>
        <end position="165"/>
    </location>
    <ligand>
        <name>NADP(+)</name>
        <dbReference type="ChEBI" id="CHEBI:58349"/>
    </ligand>
</feature>
<feature type="binding site" evidence="1">
    <location>
        <position position="188"/>
    </location>
    <ligand>
        <name>NADP(+)</name>
        <dbReference type="ChEBI" id="CHEBI:58349"/>
    </ligand>
</feature>
<feature type="binding site" evidence="1">
    <location>
        <position position="229"/>
    </location>
    <ligand>
        <name>NADP(+)</name>
        <dbReference type="ChEBI" id="CHEBI:58349"/>
    </ligand>
</feature>
<comment type="function">
    <text evidence="1">Catalyzes the oxidation of 5,10-methylenetetrahydrofolate to 5,10-methenyltetrahydrofolate and then the hydrolysis of 5,10-methenyltetrahydrofolate to 10-formyltetrahydrofolate.</text>
</comment>
<comment type="catalytic activity">
    <reaction evidence="1">
        <text>(6R)-5,10-methylene-5,6,7,8-tetrahydrofolate + NADP(+) = (6R)-5,10-methenyltetrahydrofolate + NADPH</text>
        <dbReference type="Rhea" id="RHEA:22812"/>
        <dbReference type="ChEBI" id="CHEBI:15636"/>
        <dbReference type="ChEBI" id="CHEBI:57455"/>
        <dbReference type="ChEBI" id="CHEBI:57783"/>
        <dbReference type="ChEBI" id="CHEBI:58349"/>
        <dbReference type="EC" id="1.5.1.5"/>
    </reaction>
</comment>
<comment type="catalytic activity">
    <reaction evidence="1">
        <text>(6R)-5,10-methenyltetrahydrofolate + H2O = (6R)-10-formyltetrahydrofolate + H(+)</text>
        <dbReference type="Rhea" id="RHEA:23700"/>
        <dbReference type="ChEBI" id="CHEBI:15377"/>
        <dbReference type="ChEBI" id="CHEBI:15378"/>
        <dbReference type="ChEBI" id="CHEBI:57455"/>
        <dbReference type="ChEBI" id="CHEBI:195366"/>
        <dbReference type="EC" id="3.5.4.9"/>
    </reaction>
</comment>
<comment type="pathway">
    <text evidence="1">One-carbon metabolism; tetrahydrofolate interconversion.</text>
</comment>
<comment type="subunit">
    <text evidence="1">Homodimer.</text>
</comment>
<comment type="similarity">
    <text evidence="1">Belongs to the tetrahydrofolate dehydrogenase/cyclohydrolase family.</text>
</comment>
<gene>
    <name evidence="1" type="primary">folD</name>
    <name type="ordered locus">NAMH_0757</name>
</gene>
<evidence type="ECO:0000255" key="1">
    <source>
        <dbReference type="HAMAP-Rule" id="MF_01576"/>
    </source>
</evidence>